<reference key="1">
    <citation type="journal article" date="1999" name="Plant Biol.">
        <title>Differential expression and nuclear localization of response regulator-like proteins from Arabidopsis thaliana.</title>
        <authorList>
            <person name="Lohrmann J."/>
            <person name="Buchholz G."/>
            <person name="Keitel C."/>
            <person name="Sweere U."/>
            <person name="Kircher S."/>
            <person name="Baeurle I."/>
            <person name="Kudla J."/>
            <person name="Schaefer E."/>
            <person name="Harter K."/>
        </authorList>
    </citation>
    <scope>NUCLEOTIDE SEQUENCE [MRNA]</scope>
    <source>
        <strain>cv. Columbia</strain>
        <tissue>Hypocotyl</tissue>
    </source>
</reference>
<reference key="2">
    <citation type="journal article" date="2000" name="Nature">
        <title>Sequence and analysis of chromosome 1 of the plant Arabidopsis thaliana.</title>
        <authorList>
            <person name="Theologis A."/>
            <person name="Ecker J.R."/>
            <person name="Palm C.J."/>
            <person name="Federspiel N.A."/>
            <person name="Kaul S."/>
            <person name="White O."/>
            <person name="Alonso J."/>
            <person name="Altafi H."/>
            <person name="Araujo R."/>
            <person name="Bowman C.L."/>
            <person name="Brooks S.Y."/>
            <person name="Buehler E."/>
            <person name="Chan A."/>
            <person name="Chao Q."/>
            <person name="Chen H."/>
            <person name="Cheuk R.F."/>
            <person name="Chin C.W."/>
            <person name="Chung M.K."/>
            <person name="Conn L."/>
            <person name="Conway A.B."/>
            <person name="Conway A.R."/>
            <person name="Creasy T.H."/>
            <person name="Dewar K."/>
            <person name="Dunn P."/>
            <person name="Etgu P."/>
            <person name="Feldblyum T.V."/>
            <person name="Feng J.-D."/>
            <person name="Fong B."/>
            <person name="Fujii C.Y."/>
            <person name="Gill J.E."/>
            <person name="Goldsmith A.D."/>
            <person name="Haas B."/>
            <person name="Hansen N.F."/>
            <person name="Hughes B."/>
            <person name="Huizar L."/>
            <person name="Hunter J.L."/>
            <person name="Jenkins J."/>
            <person name="Johnson-Hopson C."/>
            <person name="Khan S."/>
            <person name="Khaykin E."/>
            <person name="Kim C.J."/>
            <person name="Koo H.L."/>
            <person name="Kremenetskaia I."/>
            <person name="Kurtz D.B."/>
            <person name="Kwan A."/>
            <person name="Lam B."/>
            <person name="Langin-Hooper S."/>
            <person name="Lee A."/>
            <person name="Lee J.M."/>
            <person name="Lenz C.A."/>
            <person name="Li J.H."/>
            <person name="Li Y.-P."/>
            <person name="Lin X."/>
            <person name="Liu S.X."/>
            <person name="Liu Z.A."/>
            <person name="Luros J.S."/>
            <person name="Maiti R."/>
            <person name="Marziali A."/>
            <person name="Militscher J."/>
            <person name="Miranda M."/>
            <person name="Nguyen M."/>
            <person name="Nierman W.C."/>
            <person name="Osborne B.I."/>
            <person name="Pai G."/>
            <person name="Peterson J."/>
            <person name="Pham P.K."/>
            <person name="Rizzo M."/>
            <person name="Rooney T."/>
            <person name="Rowley D."/>
            <person name="Sakano H."/>
            <person name="Salzberg S.L."/>
            <person name="Schwartz J.R."/>
            <person name="Shinn P."/>
            <person name="Southwick A.M."/>
            <person name="Sun H."/>
            <person name="Tallon L.J."/>
            <person name="Tambunga G."/>
            <person name="Toriumi M.J."/>
            <person name="Town C.D."/>
            <person name="Utterback T."/>
            <person name="Van Aken S."/>
            <person name="Vaysberg M."/>
            <person name="Vysotskaia V.S."/>
            <person name="Walker M."/>
            <person name="Wu D."/>
            <person name="Yu G."/>
            <person name="Fraser C.M."/>
            <person name="Venter J.C."/>
            <person name="Davis R.W."/>
        </authorList>
    </citation>
    <scope>NUCLEOTIDE SEQUENCE [LARGE SCALE GENOMIC DNA]</scope>
    <source>
        <strain>cv. Columbia</strain>
    </source>
</reference>
<reference key="3">
    <citation type="journal article" date="2017" name="Plant J.">
        <title>Araport11: a complete reannotation of the Arabidopsis thaliana reference genome.</title>
        <authorList>
            <person name="Cheng C.Y."/>
            <person name="Krishnakumar V."/>
            <person name="Chan A.P."/>
            <person name="Thibaud-Nissen F."/>
            <person name="Schobel S."/>
            <person name="Town C.D."/>
        </authorList>
    </citation>
    <scope>GENOME REANNOTATION</scope>
    <source>
        <strain>cv. Columbia</strain>
    </source>
</reference>
<reference key="4">
    <citation type="journal article" date="2003" name="Science">
        <title>Empirical analysis of transcriptional activity in the Arabidopsis genome.</title>
        <authorList>
            <person name="Yamada K."/>
            <person name="Lim J."/>
            <person name="Dale J.M."/>
            <person name="Chen H."/>
            <person name="Shinn P."/>
            <person name="Palm C.J."/>
            <person name="Southwick A.M."/>
            <person name="Wu H.C."/>
            <person name="Kim C.J."/>
            <person name="Nguyen M."/>
            <person name="Pham P.K."/>
            <person name="Cheuk R.F."/>
            <person name="Karlin-Newmann G."/>
            <person name="Liu S.X."/>
            <person name="Lam B."/>
            <person name="Sakano H."/>
            <person name="Wu T."/>
            <person name="Yu G."/>
            <person name="Miranda M."/>
            <person name="Quach H.L."/>
            <person name="Tripp M."/>
            <person name="Chang C.H."/>
            <person name="Lee J.M."/>
            <person name="Toriumi M.J."/>
            <person name="Chan M.M."/>
            <person name="Tang C.C."/>
            <person name="Onodera C.S."/>
            <person name="Deng J.M."/>
            <person name="Akiyama K."/>
            <person name="Ansari Y."/>
            <person name="Arakawa T."/>
            <person name="Banh J."/>
            <person name="Banno F."/>
            <person name="Bowser L."/>
            <person name="Brooks S.Y."/>
            <person name="Carninci P."/>
            <person name="Chao Q."/>
            <person name="Choy N."/>
            <person name="Enju A."/>
            <person name="Goldsmith A.D."/>
            <person name="Gurjal M."/>
            <person name="Hansen N.F."/>
            <person name="Hayashizaki Y."/>
            <person name="Johnson-Hopson C."/>
            <person name="Hsuan V.W."/>
            <person name="Iida K."/>
            <person name="Karnes M."/>
            <person name="Khan S."/>
            <person name="Koesema E."/>
            <person name="Ishida J."/>
            <person name="Jiang P.X."/>
            <person name="Jones T."/>
            <person name="Kawai J."/>
            <person name="Kamiya A."/>
            <person name="Meyers C."/>
            <person name="Nakajima M."/>
            <person name="Narusaka M."/>
            <person name="Seki M."/>
            <person name="Sakurai T."/>
            <person name="Satou M."/>
            <person name="Tamse R."/>
            <person name="Vaysberg M."/>
            <person name="Wallender E.K."/>
            <person name="Wong C."/>
            <person name="Yamamura Y."/>
            <person name="Yuan S."/>
            <person name="Shinozaki K."/>
            <person name="Davis R.W."/>
            <person name="Theologis A."/>
            <person name="Ecker J.R."/>
        </authorList>
    </citation>
    <scope>NUCLEOTIDE SEQUENCE [LARGE SCALE MRNA]</scope>
    <source>
        <strain>cv. Columbia</strain>
    </source>
</reference>
<reference key="5">
    <citation type="submission" date="2000-04" db="EMBL/GenBank/DDBJ databases">
        <title>ARR11: a member of the type-B family of response regulators of Arabidopsis thaliana.</title>
        <authorList>
            <person name="Mizuno T."/>
        </authorList>
    </citation>
    <scope>NUCLEOTIDE SEQUENCE OF 1-462</scope>
    <source>
        <strain>cv. Columbia</strain>
    </source>
</reference>
<reference key="6">
    <citation type="journal article" date="2003" name="Plant Cell Physiol.">
        <title>In vivo and in vitro characterization of the ARR11 response regulator implicated in the His-to-Asp phosphorelay signal transduction in Arabidopsis thaliana.</title>
        <authorList>
            <person name="Imamura A."/>
            <person name="Kiba T."/>
            <person name="Tajima Y."/>
            <person name="Yamashino T."/>
            <person name="Mizuno T."/>
        </authorList>
    </citation>
    <scope>CHARACTERIZATION</scope>
    <scope>FUNCTION</scope>
</reference>
<reference key="7">
    <citation type="journal article" date="2004" name="Plant Physiol.">
        <title>Type-B response regulators display overlapping expression patterns in Arabidopsis.</title>
        <authorList>
            <person name="Mason M.G."/>
            <person name="Li J."/>
            <person name="Mathews D.E."/>
            <person name="Kieber J.J."/>
            <person name="Schaller G.E."/>
        </authorList>
    </citation>
    <scope>TISSUE SPECIFICITY</scope>
</reference>
<proteinExistence type="evidence at protein level"/>
<organism>
    <name type="scientific">Arabidopsis thaliana</name>
    <name type="common">Mouse-ear cress</name>
    <dbReference type="NCBI Taxonomy" id="3702"/>
    <lineage>
        <taxon>Eukaryota</taxon>
        <taxon>Viridiplantae</taxon>
        <taxon>Streptophyta</taxon>
        <taxon>Embryophyta</taxon>
        <taxon>Tracheophyta</taxon>
        <taxon>Spermatophyta</taxon>
        <taxon>Magnoliopsida</taxon>
        <taxon>eudicotyledons</taxon>
        <taxon>Gunneridae</taxon>
        <taxon>Pentapetalae</taxon>
        <taxon>rosids</taxon>
        <taxon>malvids</taxon>
        <taxon>Brassicales</taxon>
        <taxon>Brassicaceae</taxon>
        <taxon>Camelineae</taxon>
        <taxon>Arabidopsis</taxon>
    </lineage>
</organism>
<name>ARR11_ARATH</name>
<feature type="chain" id="PRO_0000132296" description="Two-component response regulator ARR11">
    <location>
        <begin position="1"/>
        <end position="521"/>
    </location>
</feature>
<feature type="domain" description="Response regulatory" evidence="3">
    <location>
        <begin position="12"/>
        <end position="127"/>
    </location>
</feature>
<feature type="DNA-binding region" description="Myb-like GARP">
    <location>
        <begin position="195"/>
        <end position="246"/>
    </location>
</feature>
<feature type="short sequence motif" description="Nuclear localization signal" evidence="2">
    <location>
        <begin position="192"/>
        <end position="195"/>
    </location>
</feature>
<feature type="modified residue" description="4-aspartylphosphate" evidence="3">
    <location>
        <position position="63"/>
    </location>
</feature>
<feature type="sequence conflict" description="In Ref. 1; CAA06431." evidence="6" ref="1">
    <original>QH</original>
    <variation>HT</variation>
    <location>
        <begin position="103"/>
        <end position="104"/>
    </location>
</feature>
<feature type="sequence conflict" description="In Ref. 1; CAA06431." evidence="6" ref="1">
    <original>L</original>
    <variation>P</variation>
    <location>
        <position position="317"/>
    </location>
</feature>
<feature type="sequence conflict" description="In Ref. 1; CAA06431." evidence="6" ref="1">
    <original>N</original>
    <variation>I</variation>
    <location>
        <position position="382"/>
    </location>
</feature>
<gene>
    <name type="primary">ARR11</name>
    <name type="synonym">ARP3</name>
    <name type="ordered locus">At1g67710</name>
    <name type="ORF">F12A21.15</name>
</gene>
<evidence type="ECO:0000250" key="1"/>
<evidence type="ECO:0000255" key="2"/>
<evidence type="ECO:0000255" key="3">
    <source>
        <dbReference type="PROSITE-ProRule" id="PRU00169"/>
    </source>
</evidence>
<evidence type="ECO:0000269" key="4">
    <source>
    </source>
</evidence>
<evidence type="ECO:0000269" key="5">
    <source>
    </source>
</evidence>
<evidence type="ECO:0000305" key="6"/>
<dbReference type="EMBL" id="AJ005194">
    <property type="protein sequence ID" value="CAA06431.1"/>
    <property type="status" value="ALT_FRAME"/>
    <property type="molecule type" value="mRNA"/>
</dbReference>
<dbReference type="EMBL" id="AC008113">
    <property type="protein sequence ID" value="AAG28891.1"/>
    <property type="molecule type" value="Genomic_DNA"/>
</dbReference>
<dbReference type="EMBL" id="CP002684">
    <property type="protein sequence ID" value="AEE34686.1"/>
    <property type="molecule type" value="Genomic_DNA"/>
</dbReference>
<dbReference type="EMBL" id="BT008768">
    <property type="protein sequence ID" value="AAP68207.1"/>
    <property type="molecule type" value="mRNA"/>
</dbReference>
<dbReference type="EMBL" id="AB041532">
    <property type="protein sequence ID" value="BAA94549.1"/>
    <property type="status" value="ALT_FRAME"/>
    <property type="molecule type" value="mRNA"/>
</dbReference>
<dbReference type="PIR" id="C96700">
    <property type="entry name" value="C96700"/>
</dbReference>
<dbReference type="PIR" id="T52034">
    <property type="entry name" value="T52034"/>
</dbReference>
<dbReference type="PIR" id="T52074">
    <property type="entry name" value="T52074"/>
</dbReference>
<dbReference type="RefSeq" id="NP_176938.1">
    <property type="nucleotide sequence ID" value="NM_105439.3"/>
</dbReference>
<dbReference type="SMR" id="Q9FXD6"/>
<dbReference type="BioGRID" id="28317">
    <property type="interactions" value="8"/>
</dbReference>
<dbReference type="FunCoup" id="Q9FXD6">
    <property type="interactions" value="440"/>
</dbReference>
<dbReference type="IntAct" id="Q9FXD6">
    <property type="interactions" value="6"/>
</dbReference>
<dbReference type="STRING" id="3702.Q9FXD6"/>
<dbReference type="PaxDb" id="3702-AT1G67710.1"/>
<dbReference type="ProteomicsDB" id="246927"/>
<dbReference type="EnsemblPlants" id="AT1G67710.1">
    <property type="protein sequence ID" value="AT1G67710.1"/>
    <property type="gene ID" value="AT1G67710"/>
</dbReference>
<dbReference type="GeneID" id="843096"/>
<dbReference type="Gramene" id="AT1G67710.1">
    <property type="protein sequence ID" value="AT1G67710.1"/>
    <property type="gene ID" value="AT1G67710"/>
</dbReference>
<dbReference type="KEGG" id="ath:AT1G67710"/>
<dbReference type="Araport" id="AT1G67710"/>
<dbReference type="TAIR" id="AT1G67710">
    <property type="gene designation" value="ARR11"/>
</dbReference>
<dbReference type="eggNOG" id="KOG1601">
    <property type="taxonomic scope" value="Eukaryota"/>
</dbReference>
<dbReference type="HOGENOM" id="CLU_024359_3_0_1"/>
<dbReference type="InParanoid" id="Q9FXD6"/>
<dbReference type="PhylomeDB" id="Q9FXD6"/>
<dbReference type="PRO" id="PR:Q9FXD6"/>
<dbReference type="Proteomes" id="UP000006548">
    <property type="component" value="Chromosome 1"/>
</dbReference>
<dbReference type="ExpressionAtlas" id="Q9FXD6">
    <property type="expression patterns" value="baseline and differential"/>
</dbReference>
<dbReference type="GO" id="GO:0005634">
    <property type="term" value="C:nucleus"/>
    <property type="evidence" value="ECO:0007669"/>
    <property type="project" value="UniProtKB-SubCell"/>
</dbReference>
<dbReference type="GO" id="GO:0003677">
    <property type="term" value="F:DNA binding"/>
    <property type="evidence" value="ECO:0007669"/>
    <property type="project" value="UniProtKB-KW"/>
</dbReference>
<dbReference type="GO" id="GO:0003700">
    <property type="term" value="F:DNA-binding transcription factor activity"/>
    <property type="evidence" value="ECO:0000314"/>
    <property type="project" value="TAIR"/>
</dbReference>
<dbReference type="GO" id="GO:0000156">
    <property type="term" value="F:phosphorelay response regulator activity"/>
    <property type="evidence" value="ECO:0000250"/>
    <property type="project" value="TAIR"/>
</dbReference>
<dbReference type="GO" id="GO:0009736">
    <property type="term" value="P:cytokinin-activated signaling pathway"/>
    <property type="evidence" value="ECO:0000304"/>
    <property type="project" value="TAIR"/>
</dbReference>
<dbReference type="GO" id="GO:0009787">
    <property type="term" value="P:regulation of abscisic acid-activated signaling pathway"/>
    <property type="evidence" value="ECO:0000315"/>
    <property type="project" value="TAIR"/>
</dbReference>
<dbReference type="GO" id="GO:2000022">
    <property type="term" value="P:regulation of jasmonic acid mediated signaling pathway"/>
    <property type="evidence" value="ECO:0000315"/>
    <property type="project" value="TAIR"/>
</dbReference>
<dbReference type="GO" id="GO:0010082">
    <property type="term" value="P:regulation of root meristem growth"/>
    <property type="evidence" value="ECO:0000315"/>
    <property type="project" value="CACAO"/>
</dbReference>
<dbReference type="GO" id="GO:2000031">
    <property type="term" value="P:regulation of salicylic acid mediated signaling pathway"/>
    <property type="evidence" value="ECO:0000315"/>
    <property type="project" value="TAIR"/>
</dbReference>
<dbReference type="GO" id="GO:0009735">
    <property type="term" value="P:response to cytokinin"/>
    <property type="evidence" value="ECO:0000316"/>
    <property type="project" value="TAIR"/>
</dbReference>
<dbReference type="CDD" id="cd17584">
    <property type="entry name" value="REC_typeB_ARR-like"/>
    <property type="match status" value="1"/>
</dbReference>
<dbReference type="FunFam" id="1.10.10.60:FF:000007">
    <property type="entry name" value="Two-component response regulator"/>
    <property type="match status" value="1"/>
</dbReference>
<dbReference type="Gene3D" id="3.40.50.2300">
    <property type="match status" value="1"/>
</dbReference>
<dbReference type="Gene3D" id="1.10.10.60">
    <property type="entry name" value="Homeodomain-like"/>
    <property type="match status" value="1"/>
</dbReference>
<dbReference type="InterPro" id="IPR045279">
    <property type="entry name" value="ARR-like"/>
</dbReference>
<dbReference type="InterPro" id="IPR011006">
    <property type="entry name" value="CheY-like_superfamily"/>
</dbReference>
<dbReference type="InterPro" id="IPR009057">
    <property type="entry name" value="Homeodomain-like_sf"/>
</dbReference>
<dbReference type="InterPro" id="IPR006447">
    <property type="entry name" value="Myb_dom_plants"/>
</dbReference>
<dbReference type="InterPro" id="IPR017053">
    <property type="entry name" value="Response_reg_B-typ_pln"/>
</dbReference>
<dbReference type="InterPro" id="IPR001005">
    <property type="entry name" value="SANT/Myb"/>
</dbReference>
<dbReference type="InterPro" id="IPR001789">
    <property type="entry name" value="Sig_transdc_resp-reg_receiver"/>
</dbReference>
<dbReference type="NCBIfam" id="TIGR01557">
    <property type="entry name" value="myb_SHAQKYF"/>
    <property type="match status" value="1"/>
</dbReference>
<dbReference type="PANTHER" id="PTHR43874">
    <property type="entry name" value="TWO-COMPONENT RESPONSE REGULATOR"/>
    <property type="match status" value="1"/>
</dbReference>
<dbReference type="PANTHER" id="PTHR43874:SF137">
    <property type="entry name" value="TWO-COMPONENT RESPONSE REGULATOR ARR11"/>
    <property type="match status" value="1"/>
</dbReference>
<dbReference type="Pfam" id="PF00249">
    <property type="entry name" value="Myb_DNA-binding"/>
    <property type="match status" value="1"/>
</dbReference>
<dbReference type="Pfam" id="PF00072">
    <property type="entry name" value="Response_reg"/>
    <property type="match status" value="1"/>
</dbReference>
<dbReference type="PIRSF" id="PIRSF036392">
    <property type="entry name" value="RR_ARR_type-B"/>
    <property type="match status" value="1"/>
</dbReference>
<dbReference type="SMART" id="SM00448">
    <property type="entry name" value="REC"/>
    <property type="match status" value="1"/>
</dbReference>
<dbReference type="SUPFAM" id="SSF52172">
    <property type="entry name" value="CheY-like"/>
    <property type="match status" value="1"/>
</dbReference>
<dbReference type="SUPFAM" id="SSF46689">
    <property type="entry name" value="Homeodomain-like"/>
    <property type="match status" value="1"/>
</dbReference>
<dbReference type="PROSITE" id="PS50110">
    <property type="entry name" value="RESPONSE_REGULATORY"/>
    <property type="match status" value="1"/>
</dbReference>
<protein>
    <recommendedName>
        <fullName>Two-component response regulator ARR11</fullName>
    </recommendedName>
    <alternativeName>
        <fullName>Receiver-like protein 3</fullName>
    </alternativeName>
</protein>
<keyword id="KW-0010">Activator</keyword>
<keyword id="KW-0932">Cytokinin signaling pathway</keyword>
<keyword id="KW-0238">DNA-binding</keyword>
<keyword id="KW-0539">Nucleus</keyword>
<keyword id="KW-0597">Phosphoprotein</keyword>
<keyword id="KW-1185">Reference proteome</keyword>
<keyword id="KW-0804">Transcription</keyword>
<keyword id="KW-0805">Transcription regulation</keyword>
<keyword id="KW-0902">Two-component regulatory system</keyword>
<sequence>MEKSGFSPVGLRVLVVDDDPTWLKILEKMLKKCSYEVTTCGLAREALRLLRERKDGYDIVISDVNMPDMDGFKLLEHVGLELDLPVIMMSVDGETSRVMKGVQHGACDYLLKPIRMKELKIIWQHVLRKKLQEVRDIEGCGYEGGADWITRYDEAHFLGGGEDVSFGKKRKDFDFEKKLLQDESDPSSSSSKKARVVWSFELHHKFVNAVNQIGCDHKAGPKKILDLMNVPWLTRENVASHLQKYRLYLSRLEKGKELKCYSGGVKNADSSPKDVEVNSGYQSPGRSSYVFSGGNSLIQKATEIDPKPLASASLSDLNTDVIMPPKTKKTRIGFDPPISSSAFDSLLPWNDVPEVLESKPVLYENSFLQQQPLPSQSSYVANSAPSLMEEEMKPPYETPAGGSSVNADEFLMPQDKIPTVTLQDLDPSAMKLQEFNTEAILRSLNWELPESHHSVSLDTDLDLTWLQGERFLANTGLQFQDYSSSPSLLSELPAHLNWYGNERLPDPDEYSFMVDQGLFIS</sequence>
<comment type="function">
    <text evidence="1 4">Transcriptional activator that binds specifically to the DNA sequence 5'-[AG]GATT-3'. Functions as a response regulator involved in His-to-Asp phosphorelay signal transduction system. Phosphorylation of the Asp residue in the receiver domain activates the ability of the protein to promote the transcription of target genes. Could directly activate some type-A response regulators in response to cytokinins (By similarity).</text>
</comment>
<comment type="subunit">
    <text evidence="1">Binds the target DNA as a monomer.</text>
</comment>
<comment type="interaction">
    <interactant intactId="EBI-1101048">
        <id>Q9FXD6</id>
    </interactant>
    <interactant intactId="EBI-1100725">
        <id>Q67XQ1</id>
        <label>At1g03430</label>
    </interactant>
    <organismsDiffer>false</organismsDiffer>
    <experiments>2</experiments>
</comment>
<comment type="interaction">
    <interactant intactId="EBI-1101048">
        <id>Q9FXD6</id>
    </interactant>
    <interactant intactId="EBI-15193025">
        <id>Q9LXU1</id>
        <label>NOT9B</label>
    </interactant>
    <organismsDiffer>false</organismsDiffer>
    <experiments>3</experiments>
</comment>
<comment type="subcellular location">
    <subcellularLocation>
        <location>Nucleus</location>
    </subcellularLocation>
</comment>
<comment type="tissue specificity">
    <text evidence="5">Detected in the whole plant. Predominantly expressed in roots and stems.</text>
</comment>
<comment type="PTM">
    <text>Two-component system major event consists of a His-to-Asp phosphorelay between a sensor histidine kinase (HK) and a response regulator (RR). In plants, the His-to-Asp phosphorelay involves an additional intermediate named Histidine-containing phosphotransfer protein (HPt). This multistep phosphorelay consists of a His-Asp-His-Asp sequential transfer of a phosphate group between first a His and an Asp of the HK protein, followed by the transfer to a conserved His of the HPt protein and finally the transfer to an Asp in the receiver domain of the RR protein.</text>
</comment>
<comment type="similarity">
    <text evidence="6">Belongs to the ARR family. Type-B subfamily.</text>
</comment>
<comment type="sequence caution" evidence="6">
    <conflict type="frameshift">
        <sequence resource="EMBL-CDS" id="BAA94549"/>
    </conflict>
</comment>
<comment type="sequence caution" evidence="6">
    <conflict type="frameshift">
        <sequence resource="EMBL-CDS" id="CAA06431"/>
    </conflict>
</comment>
<accession>Q9FXD6</accession>
<accession>O81712</accession>
<accession>Q9MAY2</accession>